<dbReference type="EMBL" id="BC031465">
    <property type="protein sequence ID" value="AAH31465.1"/>
    <property type="molecule type" value="mRNA"/>
</dbReference>
<dbReference type="CCDS" id="CCDS29128.1"/>
<dbReference type="RefSeq" id="NP_666196.1">
    <property type="nucleotide sequence ID" value="NM_146084.2"/>
</dbReference>
<dbReference type="SMR" id="Q8K2H3"/>
<dbReference type="BioGRID" id="230386">
    <property type="interactions" value="1"/>
</dbReference>
<dbReference type="FunCoup" id="Q8K2H3">
    <property type="interactions" value="2661"/>
</dbReference>
<dbReference type="STRING" id="10090.ENSMUSP00000038199"/>
<dbReference type="iPTMnet" id="Q8K2H3"/>
<dbReference type="PhosphoSitePlus" id="Q8K2H3"/>
<dbReference type="PaxDb" id="10090-ENSMUSP00000038199"/>
<dbReference type="PeptideAtlas" id="Q8K2H3"/>
<dbReference type="ProteomicsDB" id="277025"/>
<dbReference type="Antibodypedia" id="26554">
    <property type="antibodies" value="92 antibodies from 17 providers"/>
</dbReference>
<dbReference type="DNASU" id="225358"/>
<dbReference type="Ensembl" id="ENSMUST00000040506.8">
    <property type="protein sequence ID" value="ENSMUSP00000038199.7"/>
    <property type="gene ID" value="ENSMUSG00000036501.8"/>
</dbReference>
<dbReference type="GeneID" id="225358"/>
<dbReference type="KEGG" id="mmu:225358"/>
<dbReference type="UCSC" id="uc008eko.1">
    <property type="organism name" value="mouse"/>
</dbReference>
<dbReference type="AGR" id="MGI:2447834"/>
<dbReference type="CTD" id="51306"/>
<dbReference type="MGI" id="MGI:2447834">
    <property type="gene designation" value="Fam13b"/>
</dbReference>
<dbReference type="VEuPathDB" id="HostDB:ENSMUSG00000036501"/>
<dbReference type="eggNOG" id="KOG4270">
    <property type="taxonomic scope" value="Eukaryota"/>
</dbReference>
<dbReference type="GeneTree" id="ENSGT00950000183033"/>
<dbReference type="HOGENOM" id="CLU_012606_1_0_1"/>
<dbReference type="InParanoid" id="Q8K2H3"/>
<dbReference type="OMA" id="SSITEQX"/>
<dbReference type="OrthoDB" id="185175at2759"/>
<dbReference type="PhylomeDB" id="Q8K2H3"/>
<dbReference type="TreeFam" id="TF328895"/>
<dbReference type="Reactome" id="R-MMU-9013148">
    <property type="pathway name" value="CDC42 GTPase cycle"/>
</dbReference>
<dbReference type="Reactome" id="R-MMU-9013149">
    <property type="pathway name" value="RAC1 GTPase cycle"/>
</dbReference>
<dbReference type="BioGRID-ORCS" id="225358">
    <property type="hits" value="2 hits in 76 CRISPR screens"/>
</dbReference>
<dbReference type="ChiTaRS" id="Fam13b">
    <property type="organism name" value="mouse"/>
</dbReference>
<dbReference type="PRO" id="PR:Q8K2H3"/>
<dbReference type="Proteomes" id="UP000000589">
    <property type="component" value="Chromosome 18"/>
</dbReference>
<dbReference type="RNAct" id="Q8K2H3">
    <property type="molecule type" value="protein"/>
</dbReference>
<dbReference type="Bgee" id="ENSMUSG00000036501">
    <property type="expression patterns" value="Expressed in ureter smooth muscle and 252 other cell types or tissues"/>
</dbReference>
<dbReference type="ExpressionAtlas" id="Q8K2H3">
    <property type="expression patterns" value="baseline and differential"/>
</dbReference>
<dbReference type="GO" id="GO:0005096">
    <property type="term" value="F:GTPase activator activity"/>
    <property type="evidence" value="ECO:0007669"/>
    <property type="project" value="UniProtKB-KW"/>
</dbReference>
<dbReference type="GO" id="GO:0007165">
    <property type="term" value="P:signal transduction"/>
    <property type="evidence" value="ECO:0007669"/>
    <property type="project" value="InterPro"/>
</dbReference>
<dbReference type="CDD" id="cd04393">
    <property type="entry name" value="RhoGAP_FAM13A1a"/>
    <property type="match status" value="1"/>
</dbReference>
<dbReference type="FunFam" id="1.10.555.10:FF:000020">
    <property type="entry name" value="protein FAM13B isoform X1"/>
    <property type="match status" value="1"/>
</dbReference>
<dbReference type="Gene3D" id="1.10.555.10">
    <property type="entry name" value="Rho GTPase activation protein"/>
    <property type="match status" value="1"/>
</dbReference>
<dbReference type="InterPro" id="IPR039102">
    <property type="entry name" value="FAM13"/>
</dbReference>
<dbReference type="InterPro" id="IPR008936">
    <property type="entry name" value="Rho_GTPase_activation_prot"/>
</dbReference>
<dbReference type="InterPro" id="IPR000198">
    <property type="entry name" value="RhoGAP_dom"/>
</dbReference>
<dbReference type="PANTHER" id="PTHR15904">
    <property type="entry name" value="FAM13"/>
    <property type="match status" value="1"/>
</dbReference>
<dbReference type="PANTHER" id="PTHR15904:SF16">
    <property type="entry name" value="PROTEIN FAM13B"/>
    <property type="match status" value="1"/>
</dbReference>
<dbReference type="Pfam" id="PF00620">
    <property type="entry name" value="RhoGAP"/>
    <property type="match status" value="1"/>
</dbReference>
<dbReference type="SMART" id="SM00324">
    <property type="entry name" value="RhoGAP"/>
    <property type="match status" value="1"/>
</dbReference>
<dbReference type="SUPFAM" id="SSF48350">
    <property type="entry name" value="GTPase activation domain, GAP"/>
    <property type="match status" value="1"/>
</dbReference>
<dbReference type="PROSITE" id="PS50238">
    <property type="entry name" value="RHOGAP"/>
    <property type="match status" value="1"/>
</dbReference>
<proteinExistence type="evidence at protein level"/>
<keyword id="KW-0343">GTPase activation</keyword>
<keyword id="KW-1185">Reference proteome</keyword>
<evidence type="ECO:0000255" key="1">
    <source>
        <dbReference type="PROSITE-ProRule" id="PRU00172"/>
    </source>
</evidence>
<evidence type="ECO:0000256" key="2">
    <source>
        <dbReference type="SAM" id="MobiDB-lite"/>
    </source>
</evidence>
<evidence type="ECO:0000305" key="3"/>
<name>FA13B_MOUSE</name>
<feature type="chain" id="PRO_0000058925" description="Protein FAM13B">
    <location>
        <begin position="1"/>
        <end position="851"/>
    </location>
</feature>
<feature type="domain" description="Rho-GAP" evidence="1">
    <location>
        <begin position="23"/>
        <end position="212"/>
    </location>
</feature>
<feature type="region of interest" description="Disordered" evidence="2">
    <location>
        <begin position="556"/>
        <end position="611"/>
    </location>
</feature>
<feature type="compositionally biased region" description="Basic and acidic residues" evidence="2">
    <location>
        <begin position="556"/>
        <end position="565"/>
    </location>
</feature>
<feature type="compositionally biased region" description="Polar residues" evidence="2">
    <location>
        <begin position="573"/>
        <end position="585"/>
    </location>
</feature>
<feature type="compositionally biased region" description="Basic and acidic residues" evidence="2">
    <location>
        <begin position="596"/>
        <end position="611"/>
    </location>
</feature>
<feature type="site" description="Arginine finger; crucial for GTP hydrolysis by stabilizing the transition state" evidence="1">
    <location>
        <position position="62"/>
    </location>
</feature>
<reference key="1">
    <citation type="journal article" date="2004" name="Genome Res.">
        <title>The status, quality, and expansion of the NIH full-length cDNA project: the Mammalian Gene Collection (MGC).</title>
        <authorList>
            <consortium name="The MGC Project Team"/>
        </authorList>
    </citation>
    <scope>NUCLEOTIDE SEQUENCE [LARGE SCALE MRNA]</scope>
    <source>
        <strain>FVB/N</strain>
    </source>
</reference>
<reference key="2">
    <citation type="journal article" date="2010" name="Cell">
        <title>A tissue-specific atlas of mouse protein phosphorylation and expression.</title>
        <authorList>
            <person name="Huttlin E.L."/>
            <person name="Jedrychowski M.P."/>
            <person name="Elias J.E."/>
            <person name="Goswami T."/>
            <person name="Rad R."/>
            <person name="Beausoleil S.A."/>
            <person name="Villen J."/>
            <person name="Haas W."/>
            <person name="Sowa M.E."/>
            <person name="Gygi S.P."/>
        </authorList>
    </citation>
    <scope>IDENTIFICATION BY MASS SPECTROMETRY [LARGE SCALE ANALYSIS]</scope>
    <source>
        <tissue>Testis</tissue>
    </source>
</reference>
<sequence length="851" mass="97054">MRKSSSPSLSNCNSDLASKIFGIPLDELQQGGHPDNEVPFIVRHVVDYIEEHGGLEQQGLFQVNGNAETVEWLRQRYDSGEEVDLVKEADVPSAISLLRFFLQELPEPVIPGSLHIHLLQLSQDYNNEDEFGRKLRFLLQQLPPVNYSLLKFLCRFLANVASHHEEIWSANSLAAVFGPDVFHIYTDVEDMKEQEIVSRIMAGLLENYYEFFENEEEDFSSNDLSSITEQVNELSEEEEEDEKLEHIEELPEEGVEKSAGMPEVLQLRMTENLLDSDSVTASTRIDAAAATTTNASDGNIKCSKPVAGTTADNEVMQQDFVFEDQKNNESVGILLEPCSDHGDSEDGCPERKEYLLCDSDKLPHLILDSSSKIRDLNANTELEVTEGQSVGVQGEAACIQIAQLDLKNVSDGDKWEEPFPAFKSWQEDCESGEAQLSPQAARMTHHPLGEDCPPVLSHRSLDFGQSQRFLHDPEALDFSSKALSFTRIRRSSFSSKDEKREDRTPYQLVKKLQKKIRQFEEQFERERNSKPSYSDIAANPKVLKWMTELTKLRKQIKDAKHKNSDGEFAPQTRPRSNTLPKSFGSSLDHEDGESEGEPRVIQKEKTPSKEATLELITKRLKENRAERHLPEDIKKMTKDHLIEEKTSLQKSLLYYESQHGRPVTREERHIVKPLYDRYRLVKQMLTRASITPVLGSPSTKRRGQMLQPIIEGETAHFFEEIKEEEEDGVSLSSELGDILSTSVHTQSSLENLESDAEENQEKLARDLCLSSTRAASVPELLEQLWKARAEKKKLRKMLREFEEAFYQQNGRNAQKEDRVPVLEEYKEYKRIKAKLRLLEVLISKQDSSKSI</sequence>
<gene>
    <name type="primary">Fam13b</name>
    <name type="synonym">Fam13b1</name>
</gene>
<organism>
    <name type="scientific">Mus musculus</name>
    <name type="common">Mouse</name>
    <dbReference type="NCBI Taxonomy" id="10090"/>
    <lineage>
        <taxon>Eukaryota</taxon>
        <taxon>Metazoa</taxon>
        <taxon>Chordata</taxon>
        <taxon>Craniata</taxon>
        <taxon>Vertebrata</taxon>
        <taxon>Euteleostomi</taxon>
        <taxon>Mammalia</taxon>
        <taxon>Eutheria</taxon>
        <taxon>Euarchontoglires</taxon>
        <taxon>Glires</taxon>
        <taxon>Rodentia</taxon>
        <taxon>Myomorpha</taxon>
        <taxon>Muroidea</taxon>
        <taxon>Muridae</taxon>
        <taxon>Murinae</taxon>
        <taxon>Mus</taxon>
        <taxon>Mus</taxon>
    </lineage>
</organism>
<protein>
    <recommendedName>
        <fullName>Protein FAM13B</fullName>
    </recommendedName>
</protein>
<comment type="similarity">
    <text evidence="3">Belongs to the FAM13 family.</text>
</comment>
<accession>Q8K2H3</accession>